<protein>
    <recommendedName>
        <fullName>Cytochrome b-c1 complex subunit 9</fullName>
    </recommendedName>
    <alternativeName>
        <fullName>Complex III subunit 9</fullName>
    </alternativeName>
    <alternativeName>
        <fullName>Complex III subunit X</fullName>
    </alternativeName>
    <alternativeName>
        <fullName>Cytochrome c1 non-heme 7 kDa protein</fullName>
    </alternativeName>
    <alternativeName>
        <fullName>Ubiquinol-cytochrome c reductase complex 7.2 kDa protein</fullName>
    </alternativeName>
</protein>
<comment type="function">
    <text evidence="2 4">Component of the ubiquinol-cytochrome c oxidoreductase, a multisubunit transmembrane complex that is part of the mitochondrial electron transport chain which drives oxidative phosphorylation. The respiratory chain contains 3 multisubunit complexes succinate dehydrogenase (complex II, CII), ubiquinol-cytochrome c oxidoreductase (cytochrome b-c1 complex, complex III, CIII) and cytochrome c oxidase (complex IV, CIV), that cooperate to transfer electrons derived from NADH and succinate to molecular oxygen, creating an electrochemical gradient over the inner membrane that drives transmembrane transport and the ATP synthase. The cytochrome b-c1 complex catalyzes electron transfer from ubiquinol to cytochrome c, linking this redox reaction to translocation of protons across the mitochondrial inner membrane, with protons being carried across the membrane as hydrogens on the quinol. In the process called Q cycle, 2 protons are consumed from the matrix, 4 protons are released into the intermembrane space and 2 electrons are passed to cytochrome c.</text>
</comment>
<comment type="subunit">
    <text evidence="1 2 3 4">Component of the ubiquinol-cytochrome c oxidoreductase (cytochrome b-c1 complex, complex III, CIII), a multisubunit enzyme composed of 11 subunits (PubMed:34616041, PubMed:38575788). The complex is composed of 3 respiratory subunits cytochrome b, cytochrome c1 and Rieske protein UQCRFS1, 2 core protein subunits UQCRC1/QCR1 and UQCRC2/QCR2, and 6 low-molecular weight protein subunits UQCRH/QCR6, UQCRB/QCR7, UQCRQ/QCR8, UQCR10/QCR9, UQCR11/QCR10 and subunit 9, the cleavage product of Rieske protein UQCRFS1 (PubMed:34616041, PubMed:38575788). The complex exists as an obligatory dimer and forms supercomplexes (SCs) in the inner mitochondrial membrane with NADH-ubiquinone oxidoreductase (complex I, CI) and cytochrome c oxidase (complex IV, CIV), resulting in different assemblies (supercomplex SCI(1)III(2)IV(1) and megacomplex MCI(2)III(2)IV(2)) (PubMed:19026783, PubMed:34616041, PubMed:38575788). Interacts with STMP1 (PubMed:35101990).</text>
</comment>
<comment type="subcellular location">
    <subcellularLocation>
        <location evidence="2 4">Mitochondrion inner membrane</location>
        <topology evidence="2 4">Single-pass membrane protein</topology>
    </subcellularLocation>
</comment>
<comment type="similarity">
    <text evidence="5">Belongs to the UQCR10/QCR9 family.</text>
</comment>
<dbReference type="EMBL" id="BC024518">
    <property type="protein sequence ID" value="AAH24518.1"/>
    <property type="molecule type" value="mRNA"/>
</dbReference>
<dbReference type="CCDS" id="CCDS36098.1"/>
<dbReference type="RefSeq" id="NP_932096.1">
    <property type="nucleotide sequence ID" value="NM_197979.3"/>
</dbReference>
<dbReference type="PDB" id="7O37">
    <property type="method" value="EM"/>
    <property type="resolution" value="3.20 A"/>
    <property type="chains" value="J/U=2-64"/>
</dbReference>
<dbReference type="PDB" id="7O3C">
    <property type="method" value="EM"/>
    <property type="resolution" value="3.30 A"/>
    <property type="chains" value="J/U=2-64"/>
</dbReference>
<dbReference type="PDB" id="7O3E">
    <property type="method" value="EM"/>
    <property type="resolution" value="3.60 A"/>
    <property type="chains" value="J/U=2-64"/>
</dbReference>
<dbReference type="PDB" id="7O3H">
    <property type="method" value="EM"/>
    <property type="resolution" value="2.60 A"/>
    <property type="chains" value="J/U=2-64"/>
</dbReference>
<dbReference type="PDB" id="8IAO">
    <property type="method" value="EM"/>
    <property type="resolution" value="4.20 A"/>
    <property type="chains" value="AJ/Aj=1-64"/>
</dbReference>
<dbReference type="PDB" id="8IAR">
    <property type="method" value="EM"/>
    <property type="resolution" value="3.40 A"/>
    <property type="chains" value="AJ/Aj=1-64"/>
</dbReference>
<dbReference type="PDB" id="8IB4">
    <property type="method" value="EM"/>
    <property type="resolution" value="4.30 A"/>
    <property type="chains" value="AJ/Aj=1-64"/>
</dbReference>
<dbReference type="PDB" id="8IB7">
    <property type="method" value="EM"/>
    <property type="resolution" value="3.40 A"/>
    <property type="chains" value="AJ/Aj=1-64"/>
</dbReference>
<dbReference type="PDB" id="8IB9">
    <property type="method" value="EM"/>
    <property type="resolution" value="4.30 A"/>
    <property type="chains" value="AJ/Aj=1-64"/>
</dbReference>
<dbReference type="PDB" id="8IBC">
    <property type="method" value="EM"/>
    <property type="resolution" value="3.60 A"/>
    <property type="chains" value="AJ/Aj=1-64"/>
</dbReference>
<dbReference type="PDB" id="8IBD">
    <property type="method" value="EM"/>
    <property type="resolution" value="4.20 A"/>
    <property type="chains" value="AJ/Aj=1-64"/>
</dbReference>
<dbReference type="PDB" id="8IBG">
    <property type="method" value="EM"/>
    <property type="resolution" value="3.80 A"/>
    <property type="chains" value="AJ/Aj=1-64"/>
</dbReference>
<dbReference type="PDB" id="8IC2">
    <property type="method" value="EM"/>
    <property type="resolution" value="6.30 A"/>
    <property type="chains" value="AJ/Aj=1-64"/>
</dbReference>
<dbReference type="PDB" id="8IC5">
    <property type="method" value="EM"/>
    <property type="resolution" value="4.10 A"/>
    <property type="chains" value="AJ/Aj=1-64"/>
</dbReference>
<dbReference type="PDB" id="8PW5">
    <property type="method" value="EM"/>
    <property type="resolution" value="3.60 A"/>
    <property type="chains" value="J/U=1-64"/>
</dbReference>
<dbReference type="PDB" id="8PW6">
    <property type="method" value="EM"/>
    <property type="resolution" value="3.30 A"/>
    <property type="chains" value="J/U=1-64"/>
</dbReference>
<dbReference type="PDB" id="8PW7">
    <property type="method" value="EM"/>
    <property type="resolution" value="3.50 A"/>
    <property type="chains" value="J/U=1-64"/>
</dbReference>
<dbReference type="PDB" id="8UCA">
    <property type="method" value="EM"/>
    <property type="resolution" value="3.70 A"/>
    <property type="chains" value="3J/3U=2-64"/>
</dbReference>
<dbReference type="PDBsum" id="7O37"/>
<dbReference type="PDBsum" id="7O3C"/>
<dbReference type="PDBsum" id="7O3E"/>
<dbReference type="PDBsum" id="7O3H"/>
<dbReference type="PDBsum" id="8IAO"/>
<dbReference type="PDBsum" id="8IAR"/>
<dbReference type="PDBsum" id="8IB4"/>
<dbReference type="PDBsum" id="8IB7"/>
<dbReference type="PDBsum" id="8IB9"/>
<dbReference type="PDBsum" id="8IBC"/>
<dbReference type="PDBsum" id="8IBD"/>
<dbReference type="PDBsum" id="8IBG"/>
<dbReference type="PDBsum" id="8IC2"/>
<dbReference type="PDBsum" id="8IC5"/>
<dbReference type="PDBsum" id="8PW5"/>
<dbReference type="PDBsum" id="8PW6"/>
<dbReference type="PDBsum" id="8PW7"/>
<dbReference type="PDBsum" id="8UCA"/>
<dbReference type="EMDB" id="EMD-12702"/>
<dbReference type="EMDB" id="EMD-12703"/>
<dbReference type="EMDB" id="EMD-12705"/>
<dbReference type="EMDB" id="EMD-12706"/>
<dbReference type="EMDB" id="EMD-17989"/>
<dbReference type="EMDB" id="EMD-17990"/>
<dbReference type="EMDB" id="EMD-17991"/>
<dbReference type="EMDB" id="EMD-35313"/>
<dbReference type="EMDB" id="EMD-35316"/>
<dbReference type="EMDB" id="EMD-35331"/>
<dbReference type="EMDB" id="EMD-35334"/>
<dbReference type="EMDB" id="EMD-35336"/>
<dbReference type="EMDB" id="EMD-35339"/>
<dbReference type="EMDB" id="EMD-35340"/>
<dbReference type="EMDB" id="EMD-35343"/>
<dbReference type="EMDB" id="EMD-35352"/>
<dbReference type="EMDB" id="EMD-35355"/>
<dbReference type="EMDB" id="EMD-42122"/>
<dbReference type="SMR" id="Q8R1I1"/>
<dbReference type="BioGRID" id="211253">
    <property type="interactions" value="44"/>
</dbReference>
<dbReference type="ComplexPortal" id="CPX-563">
    <property type="entry name" value="Mitochondrial respiratory chain complex III"/>
</dbReference>
<dbReference type="CORUM" id="Q8R1I1"/>
<dbReference type="FunCoup" id="Q8R1I1">
    <property type="interactions" value="1303"/>
</dbReference>
<dbReference type="IntAct" id="Q8R1I1">
    <property type="interactions" value="3"/>
</dbReference>
<dbReference type="MINT" id="Q8R1I1"/>
<dbReference type="STRING" id="10090.ENSMUSP00000054856"/>
<dbReference type="GlyGen" id="Q8R1I1">
    <property type="glycosylation" value="1 site, 1 O-linked glycan (1 site)"/>
</dbReference>
<dbReference type="iPTMnet" id="Q8R1I1"/>
<dbReference type="PhosphoSitePlus" id="Q8R1I1"/>
<dbReference type="SwissPalm" id="Q8R1I1"/>
<dbReference type="jPOST" id="Q8R1I1"/>
<dbReference type="PaxDb" id="10090-ENSMUSP00000054856"/>
<dbReference type="ProteomicsDB" id="301841"/>
<dbReference type="Pumba" id="Q8R1I1"/>
<dbReference type="Antibodypedia" id="24577">
    <property type="antibodies" value="86 antibodies from 22 providers"/>
</dbReference>
<dbReference type="DNASU" id="66152"/>
<dbReference type="Ensembl" id="ENSMUST00000058407.6">
    <property type="protein sequence ID" value="ENSMUSP00000054856.5"/>
    <property type="gene ID" value="ENSMUSG00000059534.9"/>
</dbReference>
<dbReference type="GeneID" id="66152"/>
<dbReference type="KEGG" id="mmu:66152"/>
<dbReference type="UCSC" id="uc007hvb.1">
    <property type="organism name" value="mouse"/>
</dbReference>
<dbReference type="AGR" id="MGI:1913402"/>
<dbReference type="CTD" id="29796"/>
<dbReference type="MGI" id="MGI:1913402">
    <property type="gene designation" value="Uqcr10"/>
</dbReference>
<dbReference type="VEuPathDB" id="HostDB:ENSMUSG00000059534"/>
<dbReference type="eggNOG" id="KOG3494">
    <property type="taxonomic scope" value="Eukaryota"/>
</dbReference>
<dbReference type="GeneTree" id="ENSGT00390000014052"/>
<dbReference type="HOGENOM" id="CLU_171977_2_0_1"/>
<dbReference type="InParanoid" id="Q8R1I1"/>
<dbReference type="OMA" id="IKHKYEV"/>
<dbReference type="OrthoDB" id="44067at2759"/>
<dbReference type="PhylomeDB" id="Q8R1I1"/>
<dbReference type="TreeFam" id="TF324385"/>
<dbReference type="Reactome" id="R-MMU-611105">
    <property type="pathway name" value="Respiratory electron transport"/>
</dbReference>
<dbReference type="Reactome" id="R-MMU-9865881">
    <property type="pathway name" value="Complex III assembly"/>
</dbReference>
<dbReference type="BioGRID-ORCS" id="66152">
    <property type="hits" value="24 hits in 78 CRISPR screens"/>
</dbReference>
<dbReference type="ChiTaRS" id="Uqcr10">
    <property type="organism name" value="mouse"/>
</dbReference>
<dbReference type="PRO" id="PR:Q8R1I1"/>
<dbReference type="Proteomes" id="UP000000589">
    <property type="component" value="Chromosome 11"/>
</dbReference>
<dbReference type="RNAct" id="Q8R1I1">
    <property type="molecule type" value="protein"/>
</dbReference>
<dbReference type="Bgee" id="ENSMUSG00000059534">
    <property type="expression patterns" value="Expressed in right kidney and 236 other cell types or tissues"/>
</dbReference>
<dbReference type="ExpressionAtlas" id="Q8R1I1">
    <property type="expression patterns" value="baseline and differential"/>
</dbReference>
<dbReference type="GO" id="GO:0005743">
    <property type="term" value="C:mitochondrial inner membrane"/>
    <property type="evidence" value="ECO:0000314"/>
    <property type="project" value="UniProtKB"/>
</dbReference>
<dbReference type="GO" id="GO:0005739">
    <property type="term" value="C:mitochondrion"/>
    <property type="evidence" value="ECO:0000314"/>
    <property type="project" value="UniProtKB"/>
</dbReference>
<dbReference type="GO" id="GO:0045275">
    <property type="term" value="C:respiratory chain complex III"/>
    <property type="evidence" value="ECO:0000314"/>
    <property type="project" value="UniProtKB"/>
</dbReference>
<dbReference type="GO" id="GO:0045333">
    <property type="term" value="P:cellular respiration"/>
    <property type="evidence" value="ECO:0000303"/>
    <property type="project" value="ComplexPortal"/>
</dbReference>
<dbReference type="GO" id="GO:0006122">
    <property type="term" value="P:mitochondrial electron transport, ubiquinol to cytochrome c"/>
    <property type="evidence" value="ECO:0000303"/>
    <property type="project" value="ComplexPortal"/>
</dbReference>
<dbReference type="FunFam" id="1.20.5.260:FF:000001">
    <property type="entry name" value="Cytochrome b-c1 complex subunit 9"/>
    <property type="match status" value="1"/>
</dbReference>
<dbReference type="Gene3D" id="1.20.5.260">
    <property type="entry name" value="Cytochrome b-c1 complex subunit 9"/>
    <property type="match status" value="1"/>
</dbReference>
<dbReference type="InterPro" id="IPR008027">
    <property type="entry name" value="QCR9"/>
</dbReference>
<dbReference type="InterPro" id="IPR036656">
    <property type="entry name" value="QCR9_sf"/>
</dbReference>
<dbReference type="PANTHER" id="PTHR12980:SF0">
    <property type="entry name" value="CYTOCHROME B-C1 COMPLEX SUBUNIT 9"/>
    <property type="match status" value="1"/>
</dbReference>
<dbReference type="PANTHER" id="PTHR12980">
    <property type="entry name" value="UBIQUINOL-CYTOCHROME C REDUCTASE COMPLEX, SUBUNIT X"/>
    <property type="match status" value="1"/>
</dbReference>
<dbReference type="Pfam" id="PF05365">
    <property type="entry name" value="UCR_UQCRX_QCR9"/>
    <property type="match status" value="1"/>
</dbReference>
<dbReference type="SUPFAM" id="SSF81514">
    <property type="entry name" value="Subunit X (non-heme 7 kDa protein) of cytochrome bc1 complex (Ubiquinol-cytochrome c reductase)"/>
    <property type="match status" value="1"/>
</dbReference>
<name>QCR9_MOUSE</name>
<gene>
    <name type="primary">Uqcr10</name>
</gene>
<proteinExistence type="evidence at protein level"/>
<sequence>MSSPTIPSRLYSLLFRRTSTFALTIAVGALFFERAFDQGADAIYEHINEGKLWKHIKHKYENKE</sequence>
<organism>
    <name type="scientific">Mus musculus</name>
    <name type="common">Mouse</name>
    <dbReference type="NCBI Taxonomy" id="10090"/>
    <lineage>
        <taxon>Eukaryota</taxon>
        <taxon>Metazoa</taxon>
        <taxon>Chordata</taxon>
        <taxon>Craniata</taxon>
        <taxon>Vertebrata</taxon>
        <taxon>Euteleostomi</taxon>
        <taxon>Mammalia</taxon>
        <taxon>Eutheria</taxon>
        <taxon>Euarchontoglires</taxon>
        <taxon>Glires</taxon>
        <taxon>Rodentia</taxon>
        <taxon>Myomorpha</taxon>
        <taxon>Muroidea</taxon>
        <taxon>Muridae</taxon>
        <taxon>Murinae</taxon>
        <taxon>Mus</taxon>
        <taxon>Mus</taxon>
    </lineage>
</organism>
<reference key="1">
    <citation type="journal article" date="2004" name="Genome Res.">
        <title>The status, quality, and expansion of the NIH full-length cDNA project: the Mammalian Gene Collection (MGC).</title>
        <authorList>
            <consortium name="The MGC Project Team"/>
        </authorList>
    </citation>
    <scope>NUCLEOTIDE SEQUENCE [LARGE SCALE MRNA]</scope>
    <source>
        <strain>FVB/N</strain>
        <tissue>Colon</tissue>
    </source>
</reference>
<reference key="2">
    <citation type="submission" date="2007-04" db="UniProtKB">
        <authorList>
            <person name="Lubec G."/>
            <person name="Kang S.U."/>
        </authorList>
    </citation>
    <scope>PROTEIN SEQUENCE OF 10-16 AND 35-51</scope>
    <scope>IDENTIFICATION BY MASS SPECTROMETRY</scope>
    <source>
        <strain>C57BL/6J</strain>
        <tissue>Brain</tissue>
    </source>
</reference>
<reference key="3">
    <citation type="journal article" date="2008" name="Mol. Cell">
        <title>Respiratory active mitochondrial supercomplexes.</title>
        <authorList>
            <person name="Acin-Perez R."/>
            <person name="Fernandez-Silva P."/>
            <person name="Peleato M.L."/>
            <person name="Perez-Martos A."/>
            <person name="Enriquez J.A."/>
        </authorList>
    </citation>
    <scope>SUBUNIT</scope>
</reference>
<reference key="4">
    <citation type="journal article" date="2010" name="Cell">
        <title>A tissue-specific atlas of mouse protein phosphorylation and expression.</title>
        <authorList>
            <person name="Huttlin E.L."/>
            <person name="Jedrychowski M.P."/>
            <person name="Elias J.E."/>
            <person name="Goswami T."/>
            <person name="Rad R."/>
            <person name="Beausoleil S.A."/>
            <person name="Villen J."/>
            <person name="Haas W."/>
            <person name="Sowa M.E."/>
            <person name="Gygi S.P."/>
        </authorList>
    </citation>
    <scope>IDENTIFICATION BY MASS SPECTROMETRY [LARGE SCALE ANALYSIS]</scope>
    <source>
        <tissue>Brain</tissue>
        <tissue>Brown adipose tissue</tissue>
        <tissue>Heart</tissue>
        <tissue>Kidney</tissue>
        <tissue>Liver</tissue>
        <tissue>Spleen</tissue>
        <tissue>Testis</tissue>
    </source>
</reference>
<reference key="5">
    <citation type="journal article" date="2022" name="Proc. Natl. Acad. Sci. U.S.A.">
        <title>The cardiac-enriched microprotein mitolamban regulates mitochondrial respiratory complex assembly and function in mice.</title>
        <authorList>
            <person name="Makarewich C.A."/>
            <person name="Munir A.Z."/>
            <person name="Bezprozvannaya S."/>
            <person name="Gibson A.M."/>
            <person name="Young Kim S."/>
            <person name="Martin-Sandoval M.S."/>
            <person name="Mathews T.P."/>
            <person name="Szweda L.I."/>
            <person name="Bassel-Duby R."/>
            <person name="Olson E.N."/>
        </authorList>
    </citation>
    <scope>INTERACTION WITH STMP1</scope>
</reference>
<reference evidence="6 7 8" key="6">
    <citation type="journal article" date="2021" name="Nature">
        <title>Structure and assembly of the mammalian mitochondrial supercomplex CIII2CIV.</title>
        <authorList>
            <person name="Vercellino I."/>
            <person name="Sazanov L.A."/>
        </authorList>
    </citation>
    <scope>STRUCTURE BY ELECTRON MICROSCOPY (3.20 ANGSTROMS) IN COMPLEX WITH MITOCHONDRIAL RESPIRATORY SUPERCOMPLEX</scope>
    <scope>FUNCTION</scope>
    <scope>SUBCELLULAR LOCATION</scope>
    <scope>SUBUNIT</scope>
</reference>
<reference evidence="9" key="7">
    <citation type="journal article" date="2024" name="Nat. Struct. Mol. Biol.">
        <title>SCAF1 drives the compositional diversity of mammalian respirasomes.</title>
        <authorList>
            <person name="Vercellino I."/>
            <person name="Sazanov L.A."/>
        </authorList>
    </citation>
    <scope>STRUCTURE BY ELECTRON MICROSCOPY (3.60 ANGSTROMS) IN COMPLEX WITH MITOCHONDRIAL RESPIRATORY SUPERCOMPLEX</scope>
    <scope>FUNCTION</scope>
    <scope>SUBCELLULAR LOCATION</scope>
    <scope>SUBUNIT</scope>
</reference>
<evidence type="ECO:0000269" key="1">
    <source>
    </source>
</evidence>
<evidence type="ECO:0000269" key="2">
    <source>
    </source>
</evidence>
<evidence type="ECO:0000269" key="3">
    <source>
    </source>
</evidence>
<evidence type="ECO:0000269" key="4">
    <source>
    </source>
</evidence>
<evidence type="ECO:0000305" key="5"/>
<evidence type="ECO:0000312" key="6">
    <source>
        <dbReference type="PDB" id="7O3E"/>
    </source>
</evidence>
<evidence type="ECO:0007744" key="7">
    <source>
        <dbReference type="PDB" id="7O37"/>
    </source>
</evidence>
<evidence type="ECO:0007744" key="8">
    <source>
        <dbReference type="PDB" id="7O3C"/>
    </source>
</evidence>
<evidence type="ECO:0007744" key="9">
    <source>
        <dbReference type="PDB" id="8PW5"/>
    </source>
</evidence>
<evidence type="ECO:0007829" key="10">
    <source>
        <dbReference type="PDB" id="7O3H"/>
    </source>
</evidence>
<accession>Q8R1I1</accession>
<feature type="chain" id="PRO_0000193554" description="Cytochrome b-c1 complex subunit 9">
    <location>
        <begin position="1"/>
        <end position="64"/>
    </location>
</feature>
<feature type="topological domain" description="Mitochondrial matrix" evidence="2 7 8">
    <location>
        <begin position="2"/>
        <end position="18"/>
    </location>
</feature>
<feature type="transmembrane region" description="Helical" evidence="2 7 8">
    <location>
        <begin position="19"/>
        <end position="43"/>
    </location>
</feature>
<feature type="topological domain" description="Mitochondrial intermembrane" evidence="2 7 8">
    <location>
        <begin position="44"/>
        <end position="63"/>
    </location>
</feature>
<feature type="helix" evidence="10">
    <location>
        <begin position="6"/>
        <end position="13"/>
    </location>
</feature>
<feature type="helix" evidence="10">
    <location>
        <begin position="18"/>
        <end position="47"/>
    </location>
</feature>
<feature type="turn" evidence="10">
    <location>
        <begin position="49"/>
        <end position="51"/>
    </location>
</feature>
<feature type="helix" evidence="10">
    <location>
        <begin position="53"/>
        <end position="56"/>
    </location>
</feature>
<feature type="helix" evidence="10">
    <location>
        <begin position="57"/>
        <end position="59"/>
    </location>
</feature>
<keyword id="KW-0002">3D-structure</keyword>
<keyword id="KW-0903">Direct protein sequencing</keyword>
<keyword id="KW-0249">Electron transport</keyword>
<keyword id="KW-0472">Membrane</keyword>
<keyword id="KW-0496">Mitochondrion</keyword>
<keyword id="KW-0999">Mitochondrion inner membrane</keyword>
<keyword id="KW-1185">Reference proteome</keyword>
<keyword id="KW-0679">Respiratory chain</keyword>
<keyword id="KW-0812">Transmembrane</keyword>
<keyword id="KW-1133">Transmembrane helix</keyword>
<keyword id="KW-0813">Transport</keyword>